<sequence>MQIESSYLGSIDIDVKKILQFPAGLPGFAEEKEFVILEIPENPMFHVLQSVHNPNLAFVITDPYQIYTSYTFELDDYTIESLQITSQEDVAVFAIMTLKEPFHKSTINLKAPIVINMKKQLAKQYVLNLDEYSSQASIQSPPLKEGE</sequence>
<evidence type="ECO:0000255" key="1">
    <source>
        <dbReference type="HAMAP-Rule" id="MF_01185"/>
    </source>
</evidence>
<gene>
    <name evidence="1" type="primary">fliW</name>
    <name type="ordered locus">OB2504</name>
</gene>
<name>FLIW_OCEIH</name>
<proteinExistence type="inferred from homology"/>
<feature type="chain" id="PRO_0000273004" description="Flagellar assembly factor FliW">
    <location>
        <begin position="1"/>
        <end position="147"/>
    </location>
</feature>
<accession>Q8ENH9</accession>
<dbReference type="EMBL" id="BA000028">
    <property type="protein sequence ID" value="BAC14460.1"/>
    <property type="molecule type" value="Genomic_DNA"/>
</dbReference>
<dbReference type="RefSeq" id="WP_011066897.1">
    <property type="nucleotide sequence ID" value="NC_004193.1"/>
</dbReference>
<dbReference type="SMR" id="Q8ENH9"/>
<dbReference type="STRING" id="221109.gene:10734756"/>
<dbReference type="KEGG" id="oih:OB2504"/>
<dbReference type="eggNOG" id="COG1699">
    <property type="taxonomic scope" value="Bacteria"/>
</dbReference>
<dbReference type="HOGENOM" id="CLU_112356_0_2_9"/>
<dbReference type="OrthoDB" id="9801235at2"/>
<dbReference type="PhylomeDB" id="Q8ENH9"/>
<dbReference type="Proteomes" id="UP000000822">
    <property type="component" value="Chromosome"/>
</dbReference>
<dbReference type="GO" id="GO:0005737">
    <property type="term" value="C:cytoplasm"/>
    <property type="evidence" value="ECO:0007669"/>
    <property type="project" value="UniProtKB-SubCell"/>
</dbReference>
<dbReference type="GO" id="GO:0044780">
    <property type="term" value="P:bacterial-type flagellum assembly"/>
    <property type="evidence" value="ECO:0007669"/>
    <property type="project" value="UniProtKB-UniRule"/>
</dbReference>
<dbReference type="GO" id="GO:0006417">
    <property type="term" value="P:regulation of translation"/>
    <property type="evidence" value="ECO:0007669"/>
    <property type="project" value="UniProtKB-KW"/>
</dbReference>
<dbReference type="Gene3D" id="2.30.290.10">
    <property type="entry name" value="BH3618-like"/>
    <property type="match status" value="1"/>
</dbReference>
<dbReference type="HAMAP" id="MF_01185">
    <property type="entry name" value="FliW"/>
    <property type="match status" value="1"/>
</dbReference>
<dbReference type="InterPro" id="IPR003775">
    <property type="entry name" value="Flagellar_assembly_factor_FliW"/>
</dbReference>
<dbReference type="InterPro" id="IPR024046">
    <property type="entry name" value="Flagellar_assmbl_FliW_dom_sf"/>
</dbReference>
<dbReference type="NCBIfam" id="NF009793">
    <property type="entry name" value="PRK13285.1-1"/>
    <property type="match status" value="1"/>
</dbReference>
<dbReference type="PANTHER" id="PTHR39190">
    <property type="entry name" value="FLAGELLAR ASSEMBLY FACTOR FLIW"/>
    <property type="match status" value="1"/>
</dbReference>
<dbReference type="PANTHER" id="PTHR39190:SF1">
    <property type="entry name" value="FLAGELLAR ASSEMBLY FACTOR FLIW"/>
    <property type="match status" value="1"/>
</dbReference>
<dbReference type="Pfam" id="PF02623">
    <property type="entry name" value="FliW"/>
    <property type="match status" value="1"/>
</dbReference>
<dbReference type="SUPFAM" id="SSF141457">
    <property type="entry name" value="BH3618-like"/>
    <property type="match status" value="1"/>
</dbReference>
<reference key="1">
    <citation type="journal article" date="2002" name="Nucleic Acids Res.">
        <title>Genome sequence of Oceanobacillus iheyensis isolated from the Iheya Ridge and its unexpected adaptive capabilities to extreme environments.</title>
        <authorList>
            <person name="Takami H."/>
            <person name="Takaki Y."/>
            <person name="Uchiyama I."/>
        </authorList>
    </citation>
    <scope>NUCLEOTIDE SEQUENCE [LARGE SCALE GENOMIC DNA]</scope>
    <source>
        <strain>DSM 14371 / CIP 107618 / JCM 11309 / KCTC 3954 / HTE831</strain>
    </source>
</reference>
<organism>
    <name type="scientific">Oceanobacillus iheyensis (strain DSM 14371 / CIP 107618 / JCM 11309 / KCTC 3954 / HTE831)</name>
    <dbReference type="NCBI Taxonomy" id="221109"/>
    <lineage>
        <taxon>Bacteria</taxon>
        <taxon>Bacillati</taxon>
        <taxon>Bacillota</taxon>
        <taxon>Bacilli</taxon>
        <taxon>Bacillales</taxon>
        <taxon>Bacillaceae</taxon>
        <taxon>Oceanobacillus</taxon>
    </lineage>
</organism>
<keyword id="KW-1005">Bacterial flagellum biogenesis</keyword>
<keyword id="KW-0143">Chaperone</keyword>
<keyword id="KW-0963">Cytoplasm</keyword>
<keyword id="KW-1185">Reference proteome</keyword>
<keyword id="KW-0810">Translation regulation</keyword>
<protein>
    <recommendedName>
        <fullName evidence="1">Flagellar assembly factor FliW</fullName>
    </recommendedName>
</protein>
<comment type="function">
    <text evidence="1">Acts as an anti-CsrA protein, binds CsrA and prevents it from repressing translation of its target genes, one of which is flagellin. Binds to flagellin and participates in the assembly of the flagellum.</text>
</comment>
<comment type="subunit">
    <text evidence="1">Interacts with translational regulator CsrA and flagellin(s).</text>
</comment>
<comment type="subcellular location">
    <subcellularLocation>
        <location evidence="1">Cytoplasm</location>
    </subcellularLocation>
</comment>
<comment type="similarity">
    <text evidence="1">Belongs to the FliW family.</text>
</comment>